<dbReference type="EMBL" id="CH477316">
    <property type="protein sequence ID" value="EAT43769.1"/>
    <property type="molecule type" value="Genomic_DNA"/>
</dbReference>
<dbReference type="RefSeq" id="XP_001649847.1">
    <property type="nucleotide sequence ID" value="XM_001649797.1"/>
</dbReference>
<dbReference type="SMR" id="Q17BU3"/>
<dbReference type="FunCoup" id="Q17BU3">
    <property type="interactions" value="168"/>
</dbReference>
<dbReference type="STRING" id="7159.Q17BU3"/>
<dbReference type="PaxDb" id="7159-AAEL004812-PA"/>
<dbReference type="VEuPathDB" id="VectorBase:AAEL027393"/>
<dbReference type="eggNOG" id="KOG0245">
    <property type="taxonomic scope" value="Eukaryota"/>
</dbReference>
<dbReference type="HOGENOM" id="CLU_001485_10_2_1"/>
<dbReference type="InParanoid" id="Q17BU3"/>
<dbReference type="OMA" id="IKITICH"/>
<dbReference type="OrthoDB" id="3176171at2759"/>
<dbReference type="PhylomeDB" id="Q17BU3"/>
<dbReference type="Proteomes" id="UP000008820">
    <property type="component" value="Unassembled WGS sequence"/>
</dbReference>
<dbReference type="Proteomes" id="UP000682892">
    <property type="component" value="Chromosome 3"/>
</dbReference>
<dbReference type="GO" id="GO:0005737">
    <property type="term" value="C:cytoplasm"/>
    <property type="evidence" value="ECO:0007669"/>
    <property type="project" value="UniProtKB-KW"/>
</dbReference>
<dbReference type="GO" id="GO:0005874">
    <property type="term" value="C:microtubule"/>
    <property type="evidence" value="ECO:0007669"/>
    <property type="project" value="UniProtKB-KW"/>
</dbReference>
<dbReference type="GO" id="GO:0005875">
    <property type="term" value="C:microtubule associated complex"/>
    <property type="evidence" value="ECO:0000250"/>
    <property type="project" value="UniProtKB"/>
</dbReference>
<dbReference type="GO" id="GO:0005524">
    <property type="term" value="F:ATP binding"/>
    <property type="evidence" value="ECO:0007669"/>
    <property type="project" value="UniProtKB-KW"/>
</dbReference>
<dbReference type="GO" id="GO:0008017">
    <property type="term" value="F:microtubule binding"/>
    <property type="evidence" value="ECO:0007669"/>
    <property type="project" value="InterPro"/>
</dbReference>
<dbReference type="GO" id="GO:0003777">
    <property type="term" value="F:microtubule motor activity"/>
    <property type="evidence" value="ECO:0007669"/>
    <property type="project" value="InterPro"/>
</dbReference>
<dbReference type="GO" id="GO:0048489">
    <property type="term" value="P:synaptic vesicle transport"/>
    <property type="evidence" value="ECO:0000250"/>
    <property type="project" value="UniProtKB"/>
</dbReference>
<dbReference type="GO" id="GO:0047496">
    <property type="term" value="P:vesicle transport along microtubule"/>
    <property type="evidence" value="ECO:0000250"/>
    <property type="project" value="UniProtKB"/>
</dbReference>
<dbReference type="CDD" id="cd22705">
    <property type="entry name" value="FHA_KIF1"/>
    <property type="match status" value="1"/>
</dbReference>
<dbReference type="CDD" id="cd01365">
    <property type="entry name" value="KISc_KIF1A_KIF1B"/>
    <property type="match status" value="1"/>
</dbReference>
<dbReference type="CDD" id="cd01233">
    <property type="entry name" value="PH_KIFIA_KIFIB"/>
    <property type="match status" value="1"/>
</dbReference>
<dbReference type="FunFam" id="2.60.200.20:FF:000001">
    <property type="entry name" value="Kinesin family member 1B"/>
    <property type="match status" value="1"/>
</dbReference>
<dbReference type="FunFam" id="3.40.850.10:FF:000004">
    <property type="entry name" value="Kinesin-like protein isoform 2"/>
    <property type="match status" value="1"/>
</dbReference>
<dbReference type="FunFam" id="2.30.29.30:FF:000204">
    <property type="entry name" value="kinesin-like protein unc-104 isoform X6"/>
    <property type="match status" value="1"/>
</dbReference>
<dbReference type="Gene3D" id="2.60.200.20">
    <property type="match status" value="1"/>
</dbReference>
<dbReference type="Gene3D" id="6.10.250.2520">
    <property type="match status" value="1"/>
</dbReference>
<dbReference type="Gene3D" id="3.40.850.10">
    <property type="entry name" value="Kinesin motor domain"/>
    <property type="match status" value="1"/>
</dbReference>
<dbReference type="Gene3D" id="2.30.29.30">
    <property type="entry name" value="Pleckstrin-homology domain (PH domain)/Phosphotyrosine-binding domain (PTB)"/>
    <property type="match status" value="1"/>
</dbReference>
<dbReference type="InterPro" id="IPR000253">
    <property type="entry name" value="FHA_dom"/>
</dbReference>
<dbReference type="InterPro" id="IPR022164">
    <property type="entry name" value="Kinesin-like"/>
</dbReference>
<dbReference type="InterPro" id="IPR022140">
    <property type="entry name" value="Kinesin-like_KIF1-typ"/>
</dbReference>
<dbReference type="InterPro" id="IPR032405">
    <property type="entry name" value="Kinesin_assoc"/>
</dbReference>
<dbReference type="InterPro" id="IPR019821">
    <property type="entry name" value="Kinesin_motor_CS"/>
</dbReference>
<dbReference type="InterPro" id="IPR001752">
    <property type="entry name" value="Kinesin_motor_dom"/>
</dbReference>
<dbReference type="InterPro" id="IPR036961">
    <property type="entry name" value="Kinesin_motor_dom_sf"/>
</dbReference>
<dbReference type="InterPro" id="IPR027417">
    <property type="entry name" value="P-loop_NTPase"/>
</dbReference>
<dbReference type="InterPro" id="IPR011993">
    <property type="entry name" value="PH-like_dom_sf"/>
</dbReference>
<dbReference type="InterPro" id="IPR001849">
    <property type="entry name" value="PH_domain"/>
</dbReference>
<dbReference type="InterPro" id="IPR049780">
    <property type="entry name" value="PH_KIFIA_KIFIB"/>
</dbReference>
<dbReference type="InterPro" id="IPR008984">
    <property type="entry name" value="SMAD_FHA_dom_sf"/>
</dbReference>
<dbReference type="PANTHER" id="PTHR47117:SF9">
    <property type="entry name" value="KINESIN-LIKE PROTEIN KIF1C ISOFORM X1"/>
    <property type="match status" value="1"/>
</dbReference>
<dbReference type="PANTHER" id="PTHR47117">
    <property type="entry name" value="STAR-RELATED LIPID TRANSFER PROTEIN 9"/>
    <property type="match status" value="1"/>
</dbReference>
<dbReference type="Pfam" id="PF12473">
    <property type="entry name" value="DUF3694"/>
    <property type="match status" value="1"/>
</dbReference>
<dbReference type="Pfam" id="PF00498">
    <property type="entry name" value="FHA"/>
    <property type="match status" value="1"/>
</dbReference>
<dbReference type="Pfam" id="PF12423">
    <property type="entry name" value="KIF1B"/>
    <property type="match status" value="1"/>
</dbReference>
<dbReference type="Pfam" id="PF00225">
    <property type="entry name" value="Kinesin"/>
    <property type="match status" value="1"/>
</dbReference>
<dbReference type="Pfam" id="PF16183">
    <property type="entry name" value="Kinesin_assoc"/>
    <property type="match status" value="2"/>
</dbReference>
<dbReference type="Pfam" id="PF00169">
    <property type="entry name" value="PH"/>
    <property type="match status" value="1"/>
</dbReference>
<dbReference type="PRINTS" id="PR00380">
    <property type="entry name" value="KINESINHEAVY"/>
</dbReference>
<dbReference type="SMART" id="SM00240">
    <property type="entry name" value="FHA"/>
    <property type="match status" value="1"/>
</dbReference>
<dbReference type="SMART" id="SM00129">
    <property type="entry name" value="KISc"/>
    <property type="match status" value="1"/>
</dbReference>
<dbReference type="SMART" id="SM00233">
    <property type="entry name" value="PH"/>
    <property type="match status" value="1"/>
</dbReference>
<dbReference type="SUPFAM" id="SSF52540">
    <property type="entry name" value="P-loop containing nucleoside triphosphate hydrolases"/>
    <property type="match status" value="1"/>
</dbReference>
<dbReference type="SUPFAM" id="SSF50729">
    <property type="entry name" value="PH domain-like"/>
    <property type="match status" value="1"/>
</dbReference>
<dbReference type="SUPFAM" id="SSF49879">
    <property type="entry name" value="SMAD/FHA domain"/>
    <property type="match status" value="1"/>
</dbReference>
<dbReference type="PROSITE" id="PS00411">
    <property type="entry name" value="KINESIN_MOTOR_1"/>
    <property type="match status" value="1"/>
</dbReference>
<dbReference type="PROSITE" id="PS50067">
    <property type="entry name" value="KINESIN_MOTOR_2"/>
    <property type="match status" value="1"/>
</dbReference>
<dbReference type="PROSITE" id="PS50003">
    <property type="entry name" value="PH_DOMAIN"/>
    <property type="match status" value="1"/>
</dbReference>
<name>KIF1A_AEDAE</name>
<protein>
    <recommendedName>
        <fullName>Kinesin-like protein unc-104</fullName>
    </recommendedName>
</protein>
<comment type="function">
    <text evidence="1">Required for presynaptic maturation, has a role in axonal transport of dense-core vesicles carrying synaptic vesicle precursors, components required for the morphological transformation of axonal growth cones to mature boutons.</text>
</comment>
<comment type="subunit">
    <text evidence="2">Monomer.</text>
</comment>
<comment type="subcellular location">
    <subcellularLocation>
        <location evidence="1">Cytoplasm</location>
        <location evidence="1">Cytoskeleton</location>
    </subcellularLocation>
    <text evidence="1">Microtubule-associated.</text>
</comment>
<comment type="similarity">
    <text evidence="5">Belongs to the TRAFAC class myosin-kinesin ATPase superfamily. Kinesin family. Unc-104 subfamily.</text>
</comment>
<evidence type="ECO:0000250" key="1">
    <source>
        <dbReference type="UniProtKB" id="A1ZAJ2"/>
    </source>
</evidence>
<evidence type="ECO:0000250" key="2">
    <source>
        <dbReference type="UniProtKB" id="Q60575"/>
    </source>
</evidence>
<evidence type="ECO:0000255" key="3"/>
<evidence type="ECO:0000255" key="4">
    <source>
        <dbReference type="PROSITE-ProRule" id="PRU00145"/>
    </source>
</evidence>
<evidence type="ECO:0000255" key="5">
    <source>
        <dbReference type="PROSITE-ProRule" id="PRU00283"/>
    </source>
</evidence>
<evidence type="ECO:0000256" key="6">
    <source>
        <dbReference type="SAM" id="MobiDB-lite"/>
    </source>
</evidence>
<evidence type="ECO:0000312" key="7">
    <source>
        <dbReference type="EMBL" id="EAT43769.1"/>
    </source>
</evidence>
<gene>
    <name evidence="1" type="primary">unc-104</name>
    <name type="ORF">AAEL004812</name>
</gene>
<sequence length="1644" mass="185610">MSSVKVAVRVRPFNSREISRESKCIIEMSGNTTCITNPKVPPGTSDSIKRFNYDYSYWSHDPRDAEFSTQSMVYADIGEEMLQHSFDGYNVCIFAYGQTGAGKSYTMMGKQEESQEGVIPMICKDLFRRIQETEGVDLKYSVEVSYMEIYCERVRDLLNPKNKGNLKVREHPLLGPYVEDLSKLAVTSYQDIHDLIDEGNKARTVAATNMNETSSRSHAVFTIFFTQRRVDKMTSLETEKVSKISLVDLAGSERADSTGAKGTRLKEGANINKSLTTLGKVISALAEVASKSKKSKKADFIPYRDSVLTWLLRENLGGNSKTAMIAAISPADINYDETLSTLRYADRAKQIVCKAVVNEDANAKLIRELKEEIQKLRELLKAEGIEVQEGNRRTPTPMICSPNRLRKRTGSSTEMAVDQLQASEKLIAELNETWEEKLKRTEQIRLQREAVFAEMGVAVKEDGITVGVFSPKKSPHLVNLNEDPTLSECLLYYIKDGLTRLGTSEANVPQDIQLSGSHILKEHCVFENKDGVVTLVPHKDALVYLNGRKLVEPEVLQTGSRVILGKNHVFRFTHPEQAREKREKPKDKDVGENPGGNAEAADWNFAQCELLEKQGIDLKAEMQKRLCALEEQFKREKLAADQEFEEQRKTYEARIDALQKQVEEQSMTMSMYSSYSPEDFHQEEDIFVNPLFESCWTAREAGLAAWAFRKWRYHQFTSLRDDLWGNAIFLKEANAISVELKKKVQFQFTLLTDTLYSPLPPELAPSPIIGGALTNGQEDEFGQSPIPRTIVAVEVTDTKNGATHHWSLDKLRQRLELMREMYHNEAELSPTSPDYNVESLTGGDPFYDRFPWFRMVGRSFVYLSNLLYPVPLVHKVAIVNERGDVRGYLRVAVQPVMDEENADFNNGVKQSARIVFDEEQNGGHKIPKIRTIHDKDEKYIEGSNDIMKLEELEQEDADSGRGDSSVASELHESNEHEPGEHLQPGKEFTFRVTVLQATGIAAEYADIFCQFNFLHRHEEAFSTEPVKNSGSGAPLGFYHVQNITVPVTKSFIEYLKTQPIVFKVFGHYQNHPLHKDAKQDCQITRPPPRRMLPPSIPISQPVRSPKFGPLPCPPSSTVLAKHDVLVWFEICELAPNGEYVPAVVDHSDDLPCRGLYLLHQGIQRRIRITIVHEPTAEVKWKDIRELVVGRIRNQPEPADELDDSDSCVLSLGLFPGEVLEVPGDDRSFFRFEAAWDSSLHNSALLNRVTQTGEQIFITLSAYLELENCARPAIITKDLSMIIYGRDARTGPRSLKHLFSGQYRNPEANRLSGVYELSLRRASEAGSPGVQRRQRRVLDTSSTYVRGEENLHGWRPRGDSLIFDHQWELEKLTRLEEVGRVRHLLMLRERLGMDTTPNPTTKTEKDVCNLAQRASASPVHMVIPPSPQTPVKDQQTPTLPERELTPRETELVWKCVKLIQGRIGGKGDPSDTSNQLAVDASPGDEGCADMNASYISGNSIELCSPDRVDIPNGWEAPAPVPQSQEVSLRLYVPELEEIRVSPVVARKGYLNVLEHGGSGWKKRWVTVRRPYVFIFRSDKDPVERAVLNLATAQVECSEDQAAMVKVPNTFSVVTKHRGYLLQTLGDKEVHDWLYAINPLLAGQIR</sequence>
<proteinExistence type="inferred from homology"/>
<accession>Q17BU3</accession>
<keyword id="KW-0067">ATP-binding</keyword>
<keyword id="KW-0175">Coiled coil</keyword>
<keyword id="KW-0963">Cytoplasm</keyword>
<keyword id="KW-0206">Cytoskeleton</keyword>
<keyword id="KW-0493">Microtubule</keyword>
<keyword id="KW-0505">Motor protein</keyword>
<keyword id="KW-0547">Nucleotide-binding</keyword>
<keyword id="KW-1185">Reference proteome</keyword>
<reference evidence="7" key="1">
    <citation type="journal article" date="2007" name="Science">
        <title>Genome sequence of Aedes aegypti, a major arbovirus vector.</title>
        <authorList>
            <person name="Nene V."/>
            <person name="Wortman J.R."/>
            <person name="Lawson D."/>
            <person name="Haas B.J."/>
            <person name="Kodira C.D."/>
            <person name="Tu Z.J."/>
            <person name="Loftus B.J."/>
            <person name="Xi Z."/>
            <person name="Megy K."/>
            <person name="Grabherr M."/>
            <person name="Ren Q."/>
            <person name="Zdobnov E.M."/>
            <person name="Lobo N.F."/>
            <person name="Campbell K.S."/>
            <person name="Brown S.E."/>
            <person name="Bonaldo M.F."/>
            <person name="Zhu J."/>
            <person name="Sinkins S.P."/>
            <person name="Hogenkamp D.G."/>
            <person name="Amedeo P."/>
            <person name="Arensburger P."/>
            <person name="Atkinson P.W."/>
            <person name="Bidwell S.L."/>
            <person name="Biedler J."/>
            <person name="Birney E."/>
            <person name="Bruggner R.V."/>
            <person name="Costas J."/>
            <person name="Coy M.R."/>
            <person name="Crabtree J."/>
            <person name="Crawford M."/>
            <person name="DeBruyn B."/>
            <person name="DeCaprio D."/>
            <person name="Eiglmeier K."/>
            <person name="Eisenstadt E."/>
            <person name="El-Dorry H."/>
            <person name="Gelbart W.M."/>
            <person name="Gomes S.L."/>
            <person name="Hammond M."/>
            <person name="Hannick L.I."/>
            <person name="Hogan J.R."/>
            <person name="Holmes M.H."/>
            <person name="Jaffe D."/>
            <person name="Johnston S.J."/>
            <person name="Kennedy R.C."/>
            <person name="Koo H."/>
            <person name="Kravitz S."/>
            <person name="Kriventseva E.V."/>
            <person name="Kulp D."/>
            <person name="Labutti K."/>
            <person name="Lee E."/>
            <person name="Li S."/>
            <person name="Lovin D.D."/>
            <person name="Mao C."/>
            <person name="Mauceli E."/>
            <person name="Menck C.F."/>
            <person name="Miller J.R."/>
            <person name="Montgomery P."/>
            <person name="Mori A."/>
            <person name="Nascimento A.L."/>
            <person name="Naveira H.F."/>
            <person name="Nusbaum C."/>
            <person name="O'Leary S.B."/>
            <person name="Orvis J."/>
            <person name="Pertea M."/>
            <person name="Quesneville H."/>
            <person name="Reidenbach K.R."/>
            <person name="Rogers Y.-H.C."/>
            <person name="Roth C.W."/>
            <person name="Schneider J.R."/>
            <person name="Schatz M."/>
            <person name="Shumway M."/>
            <person name="Stanke M."/>
            <person name="Stinson E.O."/>
            <person name="Tubio J.M.C."/>
            <person name="Vanzee J.P."/>
            <person name="Verjovski-Almeida S."/>
            <person name="Werner D."/>
            <person name="White O.R."/>
            <person name="Wyder S."/>
            <person name="Zeng Q."/>
            <person name="Zhao Q."/>
            <person name="Zhao Y."/>
            <person name="Hill C.A."/>
            <person name="Raikhel A.S."/>
            <person name="Soares M.B."/>
            <person name="Knudson D.L."/>
            <person name="Lee N.H."/>
            <person name="Galagan J."/>
            <person name="Salzberg S.L."/>
            <person name="Paulsen I.T."/>
            <person name="Dimopoulos G."/>
            <person name="Collins F.H."/>
            <person name="Bruce B."/>
            <person name="Fraser-Liggett C.M."/>
            <person name="Severson D.W."/>
        </authorList>
    </citation>
    <scope>NUCLEOTIDE SEQUENCE [LARGE SCALE GENOMIC DNA]</scope>
    <source>
        <strain>LVPib12</strain>
    </source>
</reference>
<organism>
    <name type="scientific">Aedes aegypti</name>
    <name type="common">Yellowfever mosquito</name>
    <name type="synonym">Culex aegypti</name>
    <dbReference type="NCBI Taxonomy" id="7159"/>
    <lineage>
        <taxon>Eukaryota</taxon>
        <taxon>Metazoa</taxon>
        <taxon>Ecdysozoa</taxon>
        <taxon>Arthropoda</taxon>
        <taxon>Hexapoda</taxon>
        <taxon>Insecta</taxon>
        <taxon>Pterygota</taxon>
        <taxon>Neoptera</taxon>
        <taxon>Endopterygota</taxon>
        <taxon>Diptera</taxon>
        <taxon>Nematocera</taxon>
        <taxon>Culicoidea</taxon>
        <taxon>Culicidae</taxon>
        <taxon>Culicinae</taxon>
        <taxon>Aedini</taxon>
        <taxon>Aedes</taxon>
        <taxon>Stegomyia</taxon>
    </lineage>
</organism>
<feature type="chain" id="PRO_0000299494" description="Kinesin-like protein unc-104">
    <location>
        <begin position="1"/>
        <end position="1644"/>
    </location>
</feature>
<feature type="domain" description="Kinesin motor" evidence="5">
    <location>
        <begin position="3"/>
        <end position="351"/>
    </location>
</feature>
<feature type="domain" description="FHA" evidence="3">
    <location>
        <begin position="499"/>
        <end position="565"/>
    </location>
</feature>
<feature type="domain" description="PH" evidence="4">
    <location>
        <begin position="1542"/>
        <end position="1640"/>
    </location>
</feature>
<feature type="region of interest" description="Disordered" evidence="6">
    <location>
        <begin position="574"/>
        <end position="598"/>
    </location>
</feature>
<feature type="region of interest" description="Disordered" evidence="6">
    <location>
        <begin position="953"/>
        <end position="985"/>
    </location>
</feature>
<feature type="region of interest" description="Disordered" evidence="6">
    <location>
        <begin position="1419"/>
        <end position="1440"/>
    </location>
</feature>
<feature type="coiled-coil region" evidence="3">
    <location>
        <begin position="358"/>
        <end position="436"/>
    </location>
</feature>
<feature type="coiled-coil region" evidence="3">
    <location>
        <begin position="631"/>
        <end position="672"/>
    </location>
</feature>
<feature type="compositionally biased region" description="Basic and acidic residues" evidence="6">
    <location>
        <begin position="574"/>
        <end position="591"/>
    </location>
</feature>
<feature type="compositionally biased region" description="Basic and acidic residues" evidence="6">
    <location>
        <begin position="969"/>
        <end position="984"/>
    </location>
</feature>
<feature type="compositionally biased region" description="Polar residues" evidence="6">
    <location>
        <begin position="1428"/>
        <end position="1437"/>
    </location>
</feature>
<feature type="binding site" evidence="5">
    <location>
        <begin position="97"/>
        <end position="104"/>
    </location>
    <ligand>
        <name>ATP</name>
        <dbReference type="ChEBI" id="CHEBI:30616"/>
    </ligand>
</feature>